<feature type="chain" id="PRO_0000221520" description="Delta-actitoxin-Bcg1a" evidence="2">
    <location>
        <begin position="1"/>
        <end position="48"/>
    </location>
</feature>
<feature type="disulfide bond" evidence="1">
    <location>
        <begin position="4"/>
        <end position="45"/>
    </location>
</feature>
<feature type="disulfide bond" evidence="1">
    <location>
        <begin position="6"/>
        <end position="35"/>
    </location>
</feature>
<feature type="disulfide bond" evidence="1">
    <location>
        <begin position="28"/>
        <end position="46"/>
    </location>
</feature>
<accession>P82803</accession>
<keyword id="KW-0903">Direct protein sequencing</keyword>
<keyword id="KW-1015">Disulfide bond</keyword>
<keyword id="KW-0872">Ion channel impairing toxin</keyword>
<keyword id="KW-0166">Nematocyst</keyword>
<keyword id="KW-0528">Neurotoxin</keyword>
<keyword id="KW-0964">Secreted</keyword>
<keyword id="KW-0800">Toxin</keyword>
<keyword id="KW-0738">Voltage-gated sodium channel impairing toxin</keyword>
<evidence type="ECO:0000250" key="1">
    <source>
        <dbReference type="UniProtKB" id="P01530"/>
    </source>
</evidence>
<evidence type="ECO:0000269" key="2">
    <source>
    </source>
</evidence>
<evidence type="ECO:0000303" key="3">
    <source>
    </source>
</evidence>
<evidence type="ECO:0000303" key="4">
    <source>
    </source>
</evidence>
<evidence type="ECO:0000305" key="5"/>
<evidence type="ECO:0000305" key="6">
    <source>
    </source>
</evidence>
<reference key="1">
    <citation type="journal article" date="2005" name="Toxicon">
        <title>Primary structure, behavioral and electroencephalographic effects of an epileptogenic peptide from the sea anemone Bunodosoma cangicum.</title>
        <authorList>
            <person name="Cunha R.B."/>
            <person name="Santana A.N.C."/>
            <person name="Amaral P.C."/>
            <person name="Carvalho M.D."/>
            <person name="Carvalho D.M."/>
            <person name="Cavalheiro E.A."/>
            <person name="Maigret B."/>
            <person name="Ricart C.A.O."/>
            <person name="Cardi B.A."/>
            <person name="Sousa M.V."/>
            <person name="Carvalho K.M."/>
        </authorList>
    </citation>
    <scope>PROTEIN SEQUENCE</scope>
    <scope>FUNCTION</scope>
    <source>
        <tissue>Nematoblast</tissue>
    </source>
</reference>
<reference key="2">
    <citation type="journal article" date="2012" name="Toxicon">
        <title>Development of a rational nomenclature for naming peptide and protein toxins from sea anemones.</title>
        <authorList>
            <person name="Oliveira J.S."/>
            <person name="Fuentes-Silva D."/>
            <person name="King G.F."/>
        </authorList>
    </citation>
    <scope>NOMENCLATURE</scope>
</reference>
<proteinExistence type="evidence at protein level"/>
<comment type="function">
    <text evidence="2">Binds specifically to voltage-gated sodium channels (Nav), thereby delaying their inactivation during signal transduction. Thus it strongly stimulates mammalian cardiac muscle contraction.</text>
</comment>
<comment type="subcellular location">
    <subcellularLocation>
        <location evidence="6">Secreted</location>
    </subcellularLocation>
    <subcellularLocation>
        <location evidence="6">Nematocyst</location>
    </subcellularLocation>
</comment>
<comment type="similarity">
    <text evidence="5">Belongs to the sea anemone sodium channel inhibitory toxin family. Type I subfamily.</text>
</comment>
<sequence length="48" mass="4963">GVACRCDSDGPTVRGNSLSGTLWLTGGCPSGWHNCRGSGPFIGYCCKK</sequence>
<name>NA1C1_BUNCN</name>
<dbReference type="SMR" id="P82803"/>
<dbReference type="GO" id="GO:0005576">
    <property type="term" value="C:extracellular region"/>
    <property type="evidence" value="ECO:0007669"/>
    <property type="project" value="UniProtKB-SubCell"/>
</dbReference>
<dbReference type="GO" id="GO:0042151">
    <property type="term" value="C:nematocyst"/>
    <property type="evidence" value="ECO:0007669"/>
    <property type="project" value="UniProtKB-SubCell"/>
</dbReference>
<dbReference type="GO" id="GO:0017080">
    <property type="term" value="F:sodium channel regulator activity"/>
    <property type="evidence" value="ECO:0007669"/>
    <property type="project" value="UniProtKB-KW"/>
</dbReference>
<dbReference type="GO" id="GO:0090729">
    <property type="term" value="F:toxin activity"/>
    <property type="evidence" value="ECO:0007669"/>
    <property type="project" value="UniProtKB-KW"/>
</dbReference>
<dbReference type="GO" id="GO:0009966">
    <property type="term" value="P:regulation of signal transduction"/>
    <property type="evidence" value="ECO:0007669"/>
    <property type="project" value="InterPro"/>
</dbReference>
<dbReference type="Gene3D" id="2.20.20.10">
    <property type="entry name" value="Anthopleurin-A"/>
    <property type="match status" value="1"/>
</dbReference>
<dbReference type="InterPro" id="IPR000693">
    <property type="entry name" value="Anenome_toxin"/>
</dbReference>
<dbReference type="InterPro" id="IPR023355">
    <property type="entry name" value="Myo_ane_neurotoxin_sf"/>
</dbReference>
<dbReference type="Pfam" id="PF00706">
    <property type="entry name" value="Toxin_4"/>
    <property type="match status" value="1"/>
</dbReference>
<dbReference type="PIRSF" id="PIRSF001905">
    <property type="entry name" value="Anenome_toxin"/>
    <property type="match status" value="1"/>
</dbReference>
<dbReference type="SUPFAM" id="SSF57392">
    <property type="entry name" value="Defensin-like"/>
    <property type="match status" value="1"/>
</dbReference>
<organism>
    <name type="scientific">Bunodosoma cangicum</name>
    <name type="common">Sea anemone</name>
    <dbReference type="NCBI Taxonomy" id="138296"/>
    <lineage>
        <taxon>Eukaryota</taxon>
        <taxon>Metazoa</taxon>
        <taxon>Cnidaria</taxon>
        <taxon>Anthozoa</taxon>
        <taxon>Hexacorallia</taxon>
        <taxon>Actiniaria</taxon>
        <taxon>Actiniidae</taxon>
        <taxon>Bunodosoma</taxon>
    </lineage>
</organism>
<protein>
    <recommendedName>
        <fullName evidence="4">Delta-actitoxin-Bcg1a</fullName>
        <shortName evidence="4">Delta-AITX-Bcg1a</shortName>
    </recommendedName>
    <alternativeName>
        <fullName evidence="3">Cangitoxin</fullName>
        <shortName>CGTX</shortName>
        <shortName evidence="3">CGX</shortName>
    </alternativeName>
</protein>